<feature type="initiator methionine" description="Removed" evidence="1">
    <location>
        <position position="1"/>
    </location>
</feature>
<feature type="chain" id="PRO_0000149997" description="Cornifin">
    <location>
        <begin position="2"/>
        <end position="89"/>
    </location>
</feature>
<feature type="repeat" description="1">
    <location>
        <begin position="3"/>
        <end position="14"/>
    </location>
</feature>
<feature type="repeat" description="2">
    <location>
        <begin position="18"/>
        <end position="29"/>
    </location>
</feature>
<feature type="repeat" description="1">
    <location>
        <begin position="31"/>
        <end position="38"/>
    </location>
</feature>
<feature type="repeat" description="2">
    <location>
        <begin position="39"/>
        <end position="46"/>
    </location>
</feature>
<feature type="repeat" description="3">
    <location>
        <begin position="47"/>
        <end position="54"/>
    </location>
</feature>
<feature type="repeat" description="4">
    <location>
        <begin position="55"/>
        <end position="62"/>
    </location>
</feature>
<feature type="repeat" description="5">
    <location>
        <begin position="63"/>
        <end position="70"/>
    </location>
</feature>
<feature type="repeat" description="6">
    <location>
        <begin position="71"/>
        <end position="78"/>
    </location>
</feature>
<feature type="region of interest" description="Disordered" evidence="2">
    <location>
        <begin position="1"/>
        <end position="29"/>
    </location>
</feature>
<feature type="region of interest" description="2 X 12 AA approximate repeats">
    <location>
        <begin position="3"/>
        <end position="29"/>
    </location>
</feature>
<feature type="region of interest" description="6 X 8 AA approximate tandem repeats">
    <location>
        <begin position="31"/>
        <end position="78"/>
    </location>
</feature>
<feature type="region of interest" description="Disordered" evidence="2">
    <location>
        <begin position="68"/>
        <end position="89"/>
    </location>
</feature>
<feature type="compositionally biased region" description="Polar residues" evidence="2">
    <location>
        <begin position="75"/>
        <end position="89"/>
    </location>
</feature>
<feature type="modified residue" description="N-acetylserine" evidence="1">
    <location>
        <position position="2"/>
    </location>
</feature>
<protein>
    <recommendedName>
        <fullName>Cornifin</fullName>
    </recommendedName>
    <alternativeName>
        <fullName>Small proline-rich protein I</fullName>
        <shortName>SPR-I</shortName>
    </alternativeName>
    <alternativeName>
        <fullName>Small proline-rich squamous cell marker</fullName>
    </alternativeName>
</protein>
<gene>
    <name type="primary">SPRR1</name>
    <name type="synonym">SPR1</name>
</gene>
<keyword id="KW-0007">Acetylation</keyword>
<keyword id="KW-0963">Cytoplasm</keyword>
<keyword id="KW-0417">Keratinization</keyword>
<keyword id="KW-1185">Reference proteome</keyword>
<keyword id="KW-0677">Repeat</keyword>
<sequence length="89" mass="9852">MSSQQQKQPCTPPPQLQQQQVKQPCQPPPQEPCIPKTKEPCLPKVPEPCHPKVPEPCQPKVPEPCHPKVPEPCPSTVTPAPAQQKTKQK</sequence>
<name>SPRR1_MACMU</name>
<dbReference type="EMBL" id="M83999">
    <property type="protein sequence ID" value="AAA36907.1"/>
    <property type="molecule type" value="mRNA"/>
</dbReference>
<dbReference type="EMBL" id="S40060">
    <property type="protein sequence ID" value="AAB22513.1"/>
    <property type="molecule type" value="mRNA"/>
</dbReference>
<dbReference type="RefSeq" id="NP_001028135.1">
    <property type="nucleotide sequence ID" value="NM_001032963.1"/>
</dbReference>
<dbReference type="FunCoup" id="P35322">
    <property type="interactions" value="176"/>
</dbReference>
<dbReference type="PaxDb" id="9544-ENSMMUP00000018166"/>
<dbReference type="GeneID" id="613022"/>
<dbReference type="KEGG" id="mcc:613022"/>
<dbReference type="CTD" id="6699"/>
<dbReference type="eggNOG" id="ENOG502SCIR">
    <property type="taxonomic scope" value="Eukaryota"/>
</dbReference>
<dbReference type="HOGENOM" id="CLU_186226_0_0_1"/>
<dbReference type="InParanoid" id="P35322"/>
<dbReference type="OrthoDB" id="9837279at2759"/>
<dbReference type="TreeFam" id="TF338205"/>
<dbReference type="Proteomes" id="UP000006718">
    <property type="component" value="Unassembled WGS sequence"/>
</dbReference>
<dbReference type="GO" id="GO:0005737">
    <property type="term" value="C:cytoplasm"/>
    <property type="evidence" value="ECO:0007669"/>
    <property type="project" value="UniProtKB-SubCell"/>
</dbReference>
<dbReference type="GO" id="GO:0031424">
    <property type="term" value="P:keratinization"/>
    <property type="evidence" value="ECO:0007669"/>
    <property type="project" value="UniProtKB-KW"/>
</dbReference>
<dbReference type="Pfam" id="PF02389">
    <property type="entry name" value="Cornifin"/>
    <property type="match status" value="1"/>
</dbReference>
<dbReference type="PRINTS" id="PR00021">
    <property type="entry name" value="PRORICH"/>
</dbReference>
<comment type="function">
    <text>Cross-linked envelope protein of keratinocytes. It is a keratinocyte protein that first appears in the cell cytosol, but ultimately becomes cross-linked to membrane proteins by transglutaminase. All that results in the formation of an insoluble envelope beneath the plasma membrane.</text>
</comment>
<comment type="subcellular location">
    <subcellularLocation>
        <location>Cytoplasm</location>
    </subcellularLocation>
</comment>
<comment type="induction">
    <text>During squamous differentiation of epidermal keratinocytes.</text>
</comment>
<comment type="similarity">
    <text evidence="3">Belongs to the cornifin (SPRR) family.</text>
</comment>
<reference key="1">
    <citation type="journal article" date="1992" name="Am. J. Respir. Cell Mol. Biol.">
        <title>An unusual expression of a squamous cell marker, small proline-rich protein gene, in tracheobronchial epithelium: differential regulation and gene mapping.</title>
        <authorList>
            <person name="An G."/>
            <person name="Huang T.H."/>
            <person name="Tesfaigzi J."/>
            <person name="Garcia-Heras J."/>
            <person name="Ledbetter D.H."/>
            <person name="Carlson D.M."/>
            <person name="Wu R."/>
        </authorList>
    </citation>
    <scope>NUCLEOTIDE SEQUENCE [MRNA]</scope>
    <source>
        <tissue>Tracheobronchial epithelium</tissue>
    </source>
</reference>
<proteinExistence type="evidence at transcript level"/>
<accession>P35322</accession>
<organism>
    <name type="scientific">Macaca mulatta</name>
    <name type="common">Rhesus macaque</name>
    <dbReference type="NCBI Taxonomy" id="9544"/>
    <lineage>
        <taxon>Eukaryota</taxon>
        <taxon>Metazoa</taxon>
        <taxon>Chordata</taxon>
        <taxon>Craniata</taxon>
        <taxon>Vertebrata</taxon>
        <taxon>Euteleostomi</taxon>
        <taxon>Mammalia</taxon>
        <taxon>Eutheria</taxon>
        <taxon>Euarchontoglires</taxon>
        <taxon>Primates</taxon>
        <taxon>Haplorrhini</taxon>
        <taxon>Catarrhini</taxon>
        <taxon>Cercopithecidae</taxon>
        <taxon>Cercopithecinae</taxon>
        <taxon>Macaca</taxon>
    </lineage>
</organism>
<evidence type="ECO:0000250" key="1">
    <source>
        <dbReference type="UniProtKB" id="Q9UBC9"/>
    </source>
</evidence>
<evidence type="ECO:0000256" key="2">
    <source>
        <dbReference type="SAM" id="MobiDB-lite"/>
    </source>
</evidence>
<evidence type="ECO:0000305" key="3"/>